<organism>
    <name type="scientific">Rickettsia prowazekii (strain Madrid E)</name>
    <dbReference type="NCBI Taxonomy" id="272947"/>
    <lineage>
        <taxon>Bacteria</taxon>
        <taxon>Pseudomonadati</taxon>
        <taxon>Pseudomonadota</taxon>
        <taxon>Alphaproteobacteria</taxon>
        <taxon>Rickettsiales</taxon>
        <taxon>Rickettsiaceae</taxon>
        <taxon>Rickettsieae</taxon>
        <taxon>Rickettsia</taxon>
        <taxon>typhus group</taxon>
    </lineage>
</organism>
<sequence length="145" mass="15312">MSKKAIKGYINLIIPAAGATPAPPIGPALGQRKVNIAAFCKDFNDATNGMEKGVPLPTVITVYEDSSFSFKVKTPPASYFLKKYAKITKGSSATKKEAMVGKVTIDDCREIAKLKISDLNTKNIEAATKIICGSAASMGLEVVGN</sequence>
<comment type="function">
    <text evidence="1">Forms part of the ribosomal stalk which helps the ribosome interact with GTP-bound translation factors.</text>
</comment>
<comment type="subunit">
    <text evidence="1">Part of the ribosomal stalk of the 50S ribosomal subunit. Interacts with L10 and the large rRNA to form the base of the stalk. L10 forms an elongated spine to which L12 dimers bind in a sequential fashion forming a multimeric L10(L12)X complex.</text>
</comment>
<comment type="PTM">
    <text evidence="1">One or more lysine residues are methylated.</text>
</comment>
<comment type="similarity">
    <text evidence="1">Belongs to the universal ribosomal protein uL11 family.</text>
</comment>
<evidence type="ECO:0000255" key="1">
    <source>
        <dbReference type="HAMAP-Rule" id="MF_00736"/>
    </source>
</evidence>
<evidence type="ECO:0000305" key="2"/>
<feature type="chain" id="PRO_0000104352" description="Large ribosomal subunit protein uL11">
    <location>
        <begin position="1"/>
        <end position="145"/>
    </location>
</feature>
<keyword id="KW-0488">Methylation</keyword>
<keyword id="KW-1185">Reference proteome</keyword>
<keyword id="KW-0687">Ribonucleoprotein</keyword>
<keyword id="KW-0689">Ribosomal protein</keyword>
<keyword id="KW-0694">RNA-binding</keyword>
<keyword id="KW-0699">rRNA-binding</keyword>
<name>RL11_RICPR</name>
<accession>Q9ZE24</accession>
<dbReference type="EMBL" id="AJ235270">
    <property type="protein sequence ID" value="CAA14604.1"/>
    <property type="molecule type" value="Genomic_DNA"/>
</dbReference>
<dbReference type="PIR" id="E71723">
    <property type="entry name" value="E71723"/>
</dbReference>
<dbReference type="RefSeq" id="NP_220527.1">
    <property type="nucleotide sequence ID" value="NC_000963.1"/>
</dbReference>
<dbReference type="RefSeq" id="WP_004597179.1">
    <property type="nucleotide sequence ID" value="NC_000963.1"/>
</dbReference>
<dbReference type="SMR" id="Q9ZE24"/>
<dbReference type="STRING" id="272947.gene:17555219"/>
<dbReference type="EnsemblBacteria" id="CAA14604">
    <property type="protein sequence ID" value="CAA14604"/>
    <property type="gene ID" value="CAA14604"/>
</dbReference>
<dbReference type="GeneID" id="57569264"/>
<dbReference type="KEGG" id="rpr:RP136"/>
<dbReference type="PATRIC" id="fig|272947.5.peg.137"/>
<dbReference type="eggNOG" id="COG0080">
    <property type="taxonomic scope" value="Bacteria"/>
</dbReference>
<dbReference type="HOGENOM" id="CLU_074237_2_0_5"/>
<dbReference type="OrthoDB" id="9802408at2"/>
<dbReference type="Proteomes" id="UP000002480">
    <property type="component" value="Chromosome"/>
</dbReference>
<dbReference type="GO" id="GO:0022625">
    <property type="term" value="C:cytosolic large ribosomal subunit"/>
    <property type="evidence" value="ECO:0007669"/>
    <property type="project" value="TreeGrafter"/>
</dbReference>
<dbReference type="GO" id="GO:0070180">
    <property type="term" value="F:large ribosomal subunit rRNA binding"/>
    <property type="evidence" value="ECO:0007669"/>
    <property type="project" value="UniProtKB-UniRule"/>
</dbReference>
<dbReference type="GO" id="GO:0003735">
    <property type="term" value="F:structural constituent of ribosome"/>
    <property type="evidence" value="ECO:0007669"/>
    <property type="project" value="InterPro"/>
</dbReference>
<dbReference type="GO" id="GO:0006412">
    <property type="term" value="P:translation"/>
    <property type="evidence" value="ECO:0007669"/>
    <property type="project" value="UniProtKB-UniRule"/>
</dbReference>
<dbReference type="CDD" id="cd00349">
    <property type="entry name" value="Ribosomal_L11"/>
    <property type="match status" value="1"/>
</dbReference>
<dbReference type="FunFam" id="3.30.1550.10:FF:000005">
    <property type="entry name" value="50S ribosomal protein L11"/>
    <property type="match status" value="1"/>
</dbReference>
<dbReference type="Gene3D" id="1.10.10.250">
    <property type="entry name" value="Ribosomal protein L11, C-terminal domain"/>
    <property type="match status" value="1"/>
</dbReference>
<dbReference type="Gene3D" id="3.30.1550.10">
    <property type="entry name" value="Ribosomal protein L11/L12, N-terminal domain"/>
    <property type="match status" value="1"/>
</dbReference>
<dbReference type="HAMAP" id="MF_00736">
    <property type="entry name" value="Ribosomal_uL11"/>
    <property type="match status" value="1"/>
</dbReference>
<dbReference type="InterPro" id="IPR000911">
    <property type="entry name" value="Ribosomal_uL11"/>
</dbReference>
<dbReference type="InterPro" id="IPR006519">
    <property type="entry name" value="Ribosomal_uL11_bac-typ"/>
</dbReference>
<dbReference type="InterPro" id="IPR020783">
    <property type="entry name" value="Ribosomal_uL11_C"/>
</dbReference>
<dbReference type="InterPro" id="IPR036769">
    <property type="entry name" value="Ribosomal_uL11_C_sf"/>
</dbReference>
<dbReference type="InterPro" id="IPR020785">
    <property type="entry name" value="Ribosomal_uL11_CS"/>
</dbReference>
<dbReference type="InterPro" id="IPR020784">
    <property type="entry name" value="Ribosomal_uL11_N"/>
</dbReference>
<dbReference type="InterPro" id="IPR036796">
    <property type="entry name" value="Ribosomal_uL11_N_sf"/>
</dbReference>
<dbReference type="NCBIfam" id="TIGR01632">
    <property type="entry name" value="L11_bact"/>
    <property type="match status" value="1"/>
</dbReference>
<dbReference type="PANTHER" id="PTHR11661">
    <property type="entry name" value="60S RIBOSOMAL PROTEIN L12"/>
    <property type="match status" value="1"/>
</dbReference>
<dbReference type="PANTHER" id="PTHR11661:SF1">
    <property type="entry name" value="LARGE RIBOSOMAL SUBUNIT PROTEIN UL11M"/>
    <property type="match status" value="1"/>
</dbReference>
<dbReference type="Pfam" id="PF00298">
    <property type="entry name" value="Ribosomal_L11"/>
    <property type="match status" value="1"/>
</dbReference>
<dbReference type="Pfam" id="PF03946">
    <property type="entry name" value="Ribosomal_L11_N"/>
    <property type="match status" value="1"/>
</dbReference>
<dbReference type="SMART" id="SM00649">
    <property type="entry name" value="RL11"/>
    <property type="match status" value="1"/>
</dbReference>
<dbReference type="SUPFAM" id="SSF54747">
    <property type="entry name" value="Ribosomal L11/L12e N-terminal domain"/>
    <property type="match status" value="1"/>
</dbReference>
<dbReference type="SUPFAM" id="SSF46906">
    <property type="entry name" value="Ribosomal protein L11, C-terminal domain"/>
    <property type="match status" value="1"/>
</dbReference>
<dbReference type="PROSITE" id="PS00359">
    <property type="entry name" value="RIBOSOMAL_L11"/>
    <property type="match status" value="1"/>
</dbReference>
<proteinExistence type="inferred from homology"/>
<protein>
    <recommendedName>
        <fullName evidence="1">Large ribosomal subunit protein uL11</fullName>
    </recommendedName>
    <alternativeName>
        <fullName evidence="2">50S ribosomal protein L11</fullName>
    </alternativeName>
</protein>
<reference key="1">
    <citation type="journal article" date="1998" name="Nature">
        <title>The genome sequence of Rickettsia prowazekii and the origin of mitochondria.</title>
        <authorList>
            <person name="Andersson S.G.E."/>
            <person name="Zomorodipour A."/>
            <person name="Andersson J.O."/>
            <person name="Sicheritz-Ponten T."/>
            <person name="Alsmark U.C.M."/>
            <person name="Podowski R.M."/>
            <person name="Naeslund A.K."/>
            <person name="Eriksson A.-S."/>
            <person name="Winkler H.H."/>
            <person name="Kurland C.G."/>
        </authorList>
    </citation>
    <scope>NUCLEOTIDE SEQUENCE [LARGE SCALE GENOMIC DNA]</scope>
    <source>
        <strain>Madrid E</strain>
    </source>
</reference>
<gene>
    <name evidence="1" type="primary">rplK</name>
    <name type="ordered locus">RP136</name>
</gene>